<reference key="1">
    <citation type="journal article" date="1998" name="DNA Res.">
        <title>Complete sequence and gene organization of the genome of a hyper-thermophilic archaebacterium, Pyrococcus horikoshii OT3.</title>
        <authorList>
            <person name="Kawarabayasi Y."/>
            <person name="Sawada M."/>
            <person name="Horikawa H."/>
            <person name="Haikawa Y."/>
            <person name="Hino Y."/>
            <person name="Yamamoto S."/>
            <person name="Sekine M."/>
            <person name="Baba S."/>
            <person name="Kosugi H."/>
            <person name="Hosoyama A."/>
            <person name="Nagai Y."/>
            <person name="Sakai M."/>
            <person name="Ogura K."/>
            <person name="Otsuka R."/>
            <person name="Nakazawa H."/>
            <person name="Takamiya M."/>
            <person name="Ohfuku Y."/>
            <person name="Funahashi T."/>
            <person name="Tanaka T."/>
            <person name="Kudoh Y."/>
            <person name="Yamazaki J."/>
            <person name="Kushida N."/>
            <person name="Oguchi A."/>
            <person name="Aoki K."/>
            <person name="Yoshizawa T."/>
            <person name="Nakamura Y."/>
            <person name="Robb F.T."/>
            <person name="Horikoshi K."/>
            <person name="Masuchi Y."/>
            <person name="Shizuya H."/>
            <person name="Kikuchi H."/>
        </authorList>
    </citation>
    <scope>NUCLEOTIDE SEQUENCE [LARGE SCALE GENOMIC DNA]</scope>
    <source>
        <strain>ATCC 700860 / DSM 12428 / JCM 9974 / NBRC 100139 / OT-3</strain>
    </source>
</reference>
<comment type="function">
    <text evidence="1">Allows the formation of correctly charged Gln-tRNA(Gln) through the transamidation of misacylated Glu-tRNA(Gln) in organisms which lack glutaminyl-tRNA synthetase. The reaction takes place in the presence of glutamine and ATP through an activated gamma-phospho-Glu-tRNA(Gln). The GatDE system is specific for glutamate and does not act on aspartate.</text>
</comment>
<comment type="catalytic activity">
    <reaction evidence="1">
        <text>L-glutamyl-tRNA(Gln) + L-glutamine + ATP + H2O = L-glutaminyl-tRNA(Gln) + L-glutamate + ADP + phosphate + H(+)</text>
        <dbReference type="Rhea" id="RHEA:17521"/>
        <dbReference type="Rhea" id="RHEA-COMP:9681"/>
        <dbReference type="Rhea" id="RHEA-COMP:9684"/>
        <dbReference type="ChEBI" id="CHEBI:15377"/>
        <dbReference type="ChEBI" id="CHEBI:15378"/>
        <dbReference type="ChEBI" id="CHEBI:29985"/>
        <dbReference type="ChEBI" id="CHEBI:30616"/>
        <dbReference type="ChEBI" id="CHEBI:43474"/>
        <dbReference type="ChEBI" id="CHEBI:58359"/>
        <dbReference type="ChEBI" id="CHEBI:78520"/>
        <dbReference type="ChEBI" id="CHEBI:78521"/>
        <dbReference type="ChEBI" id="CHEBI:456216"/>
    </reaction>
</comment>
<comment type="subunit">
    <text evidence="1">Heterodimer of GatD and GatE.</text>
</comment>
<comment type="similarity">
    <text evidence="1">Belongs to the GatB/GatE family. GatE subfamily.</text>
</comment>
<proteinExistence type="inferred from homology"/>
<accession>O59133</accession>
<feature type="chain" id="PRO_0000140079" description="Glutamyl-tRNA(Gln) amidotransferase subunit E">
    <location>
        <begin position="1"/>
        <end position="635"/>
    </location>
</feature>
<feature type="region of interest" description="Disordered" evidence="2">
    <location>
        <begin position="415"/>
        <end position="437"/>
    </location>
</feature>
<evidence type="ECO:0000255" key="1">
    <source>
        <dbReference type="HAMAP-Rule" id="MF_00588"/>
    </source>
</evidence>
<evidence type="ECO:0000256" key="2">
    <source>
        <dbReference type="SAM" id="MobiDB-lite"/>
    </source>
</evidence>
<name>GATE_PYRHO</name>
<keyword id="KW-0067">ATP-binding</keyword>
<keyword id="KW-0436">Ligase</keyword>
<keyword id="KW-0547">Nucleotide-binding</keyword>
<keyword id="KW-0648">Protein biosynthesis</keyword>
<protein>
    <recommendedName>
        <fullName evidence="1">Glutamyl-tRNA(Gln) amidotransferase subunit E</fullName>
        <shortName evidence="1">Glu-ADT subunit E</shortName>
        <ecNumber evidence="1">6.3.5.-</ecNumber>
    </recommendedName>
</protein>
<dbReference type="EC" id="6.3.5.-" evidence="1"/>
<dbReference type="EMBL" id="BA000001">
    <property type="protein sequence ID" value="BAA30571.1"/>
    <property type="molecule type" value="Genomic_DNA"/>
</dbReference>
<dbReference type="PIR" id="C71021">
    <property type="entry name" value="C71021"/>
</dbReference>
<dbReference type="SMR" id="O59133"/>
<dbReference type="STRING" id="70601.gene:9378441"/>
<dbReference type="EnsemblBacteria" id="BAA30571">
    <property type="protein sequence ID" value="BAA30571"/>
    <property type="gene ID" value="BAA30571"/>
</dbReference>
<dbReference type="KEGG" id="pho:PH1464"/>
<dbReference type="eggNOG" id="arCOG01719">
    <property type="taxonomic scope" value="Archaea"/>
</dbReference>
<dbReference type="Proteomes" id="UP000000752">
    <property type="component" value="Chromosome"/>
</dbReference>
<dbReference type="GO" id="GO:0005737">
    <property type="term" value="C:cytoplasm"/>
    <property type="evidence" value="ECO:0007669"/>
    <property type="project" value="InterPro"/>
</dbReference>
<dbReference type="GO" id="GO:0004812">
    <property type="term" value="F:aminoacyl-tRNA ligase activity"/>
    <property type="evidence" value="ECO:0007669"/>
    <property type="project" value="InterPro"/>
</dbReference>
<dbReference type="GO" id="GO:0005524">
    <property type="term" value="F:ATP binding"/>
    <property type="evidence" value="ECO:0007669"/>
    <property type="project" value="UniProtKB-KW"/>
</dbReference>
<dbReference type="GO" id="GO:0050567">
    <property type="term" value="F:glutaminyl-tRNA synthase (glutamine-hydrolyzing) activity"/>
    <property type="evidence" value="ECO:0007669"/>
    <property type="project" value="UniProtKB-UniRule"/>
</dbReference>
<dbReference type="GO" id="GO:0070681">
    <property type="term" value="P:glutaminyl-tRNAGln biosynthesis via transamidation"/>
    <property type="evidence" value="ECO:0007669"/>
    <property type="project" value="TreeGrafter"/>
</dbReference>
<dbReference type="GO" id="GO:0006412">
    <property type="term" value="P:translation"/>
    <property type="evidence" value="ECO:0007669"/>
    <property type="project" value="UniProtKB-UniRule"/>
</dbReference>
<dbReference type="FunFam" id="1.10.10.410:FF:000003">
    <property type="entry name" value="Glutamyl-tRNA(Gln) amidotransferase subunit E"/>
    <property type="match status" value="1"/>
</dbReference>
<dbReference type="FunFam" id="1.10.150.380:FF:000002">
    <property type="entry name" value="Glutamyl-tRNA(Gln) amidotransferase subunit E"/>
    <property type="match status" value="1"/>
</dbReference>
<dbReference type="FunFam" id="3.30.1360.30:FF:000003">
    <property type="entry name" value="Glutamyl-tRNA(Gln) amidotransferase subunit E"/>
    <property type="match status" value="1"/>
</dbReference>
<dbReference type="Gene3D" id="1.10.10.410">
    <property type="match status" value="1"/>
</dbReference>
<dbReference type="Gene3D" id="3.30.1360.30">
    <property type="entry name" value="GAD-like domain"/>
    <property type="match status" value="1"/>
</dbReference>
<dbReference type="Gene3D" id="1.10.150.380">
    <property type="entry name" value="GatB domain, N-terminal subdomain"/>
    <property type="match status" value="1"/>
</dbReference>
<dbReference type="HAMAP" id="MF_00588">
    <property type="entry name" value="GatE"/>
    <property type="match status" value="1"/>
</dbReference>
<dbReference type="InterPro" id="IPR017959">
    <property type="entry name" value="Asn/Gln-tRNA_amidoTrfase_suB/E"/>
</dbReference>
<dbReference type="InterPro" id="IPR006075">
    <property type="entry name" value="Asn/Gln-tRNA_Trfase_suB/E_cat"/>
</dbReference>
<dbReference type="InterPro" id="IPR018027">
    <property type="entry name" value="Asn/Gln_amidotransferase"/>
</dbReference>
<dbReference type="InterPro" id="IPR003789">
    <property type="entry name" value="Asn/Gln_tRNA_amidoTrase-B-like"/>
</dbReference>
<dbReference type="InterPro" id="IPR004115">
    <property type="entry name" value="GAD-like_sf"/>
</dbReference>
<dbReference type="InterPro" id="IPR029351">
    <property type="entry name" value="GAD_dom"/>
</dbReference>
<dbReference type="InterPro" id="IPR042114">
    <property type="entry name" value="GatB_C_1"/>
</dbReference>
<dbReference type="InterPro" id="IPR023168">
    <property type="entry name" value="GatB_Yqey_C_2"/>
</dbReference>
<dbReference type="InterPro" id="IPR004414">
    <property type="entry name" value="GatE"/>
</dbReference>
<dbReference type="InterPro" id="IPR017958">
    <property type="entry name" value="Gln-tRNA_amidoTrfase_suB_CS"/>
</dbReference>
<dbReference type="InterPro" id="IPR014746">
    <property type="entry name" value="Gln_synth/guanido_kin_cat_dom"/>
</dbReference>
<dbReference type="NCBIfam" id="TIGR00134">
    <property type="entry name" value="gatE_arch"/>
    <property type="match status" value="1"/>
</dbReference>
<dbReference type="NCBIfam" id="NF003107">
    <property type="entry name" value="PRK04028.1"/>
    <property type="match status" value="1"/>
</dbReference>
<dbReference type="PANTHER" id="PTHR11659">
    <property type="entry name" value="GLUTAMYL-TRNA GLN AMIDOTRANSFERASE SUBUNIT B MITOCHONDRIAL AND PROKARYOTIC PET112-RELATED"/>
    <property type="match status" value="1"/>
</dbReference>
<dbReference type="PANTHER" id="PTHR11659:SF2">
    <property type="entry name" value="GLUTAMYL-TRNA(GLN) AMIDOTRANSFERASE SUBUNIT E"/>
    <property type="match status" value="1"/>
</dbReference>
<dbReference type="Pfam" id="PF02938">
    <property type="entry name" value="GAD"/>
    <property type="match status" value="1"/>
</dbReference>
<dbReference type="Pfam" id="PF02934">
    <property type="entry name" value="GatB_N"/>
    <property type="match status" value="1"/>
</dbReference>
<dbReference type="Pfam" id="PF02637">
    <property type="entry name" value="GatB_Yqey"/>
    <property type="match status" value="1"/>
</dbReference>
<dbReference type="SMART" id="SM00845">
    <property type="entry name" value="GatB_Yqey"/>
    <property type="match status" value="1"/>
</dbReference>
<dbReference type="SUPFAM" id="SSF55261">
    <property type="entry name" value="GAD domain-like"/>
    <property type="match status" value="1"/>
</dbReference>
<dbReference type="SUPFAM" id="SSF89095">
    <property type="entry name" value="GatB/YqeY motif"/>
    <property type="match status" value="1"/>
</dbReference>
<dbReference type="SUPFAM" id="SSF55931">
    <property type="entry name" value="Glutamine synthetase/guanido kinase"/>
    <property type="match status" value="1"/>
</dbReference>
<dbReference type="PROSITE" id="PS01234">
    <property type="entry name" value="GATB"/>
    <property type="match status" value="1"/>
</dbReference>
<gene>
    <name evidence="1" type="primary">gatE</name>
    <name type="ordered locus">PH1464</name>
</gene>
<sequence length="635" mass="72102">MMQMSDKFNYEELGLKVGLEIHRQLDTKKLFSPVPTKFSDEVDFTFQRRLRPTMSELGEVDPAALEEFKKGRVFIYEGNYQLTDLVYMDEEPPRGPDKEALEVALQIAYLLNAKPVDEVYYMRKIVIDGSNVSGFQRTAIIATDGKVETPWGTVGIPTICLEEDAARIIERKEKEVIYRLDRLGVPLVEISTTPDIHHPEQAKVVAKFIGDALRATRKVKRGLGTIRQDLNVSIKGGARIEIKGVQELDMIPLIIEREVERQLNLLKIRDELQRRGVRPEDIKEEFYDVTDVFTNTKSKIIARAIKKGGKVLAIKLPKFRGLIGREIQPGRRLGTEFADRARKYVPGIFHIDELPNYGITQEEVNEVIKRLGLGEEDAFVLVAAEEERAKNALREVIKRAKEAIIGVPEETRRALPDGNTEYMRPLPGKARMYPETDIPPIRIPDELKRKIKENLPELPQVKVEKYVREYKLDRSLAQTLVDDERDELFEELVQMGVKPSLAASILVVVLKGLRKEVPIENISDEHIKEAFSLYLEGKIAKEAFEEIFKEIARNPNKTARQIAEEKGLTLLSEDEVRKIIDEVIEQNIEVVKNKGMGAMGLIMGRVMAKVRGKADGKLVSQIVKKRLQEIVGGGV</sequence>
<organism>
    <name type="scientific">Pyrococcus horikoshii (strain ATCC 700860 / DSM 12428 / JCM 9974 / NBRC 100139 / OT-3)</name>
    <dbReference type="NCBI Taxonomy" id="70601"/>
    <lineage>
        <taxon>Archaea</taxon>
        <taxon>Methanobacteriati</taxon>
        <taxon>Methanobacteriota</taxon>
        <taxon>Thermococci</taxon>
        <taxon>Thermococcales</taxon>
        <taxon>Thermococcaceae</taxon>
        <taxon>Pyrococcus</taxon>
    </lineage>
</organism>